<reference key="1">
    <citation type="journal article" date="2003" name="Nature">
        <title>Genome divergence in two Prochlorococcus ecotypes reflects oceanic niche differentiation.</title>
        <authorList>
            <person name="Rocap G."/>
            <person name="Larimer F.W."/>
            <person name="Lamerdin J.E."/>
            <person name="Malfatti S."/>
            <person name="Chain P."/>
            <person name="Ahlgren N.A."/>
            <person name="Arellano A."/>
            <person name="Coleman M."/>
            <person name="Hauser L."/>
            <person name="Hess W.R."/>
            <person name="Johnson Z.I."/>
            <person name="Land M.L."/>
            <person name="Lindell D."/>
            <person name="Post A.F."/>
            <person name="Regala W."/>
            <person name="Shah M."/>
            <person name="Shaw S.L."/>
            <person name="Steglich C."/>
            <person name="Sullivan M.B."/>
            <person name="Ting C.S."/>
            <person name="Tolonen A."/>
            <person name="Webb E.A."/>
            <person name="Zinser E.R."/>
            <person name="Chisholm S.W."/>
        </authorList>
    </citation>
    <scope>NUCLEOTIDE SEQUENCE [LARGE SCALE GENOMIC DNA]</scope>
    <source>
        <strain>MIT 9313</strain>
    </source>
</reference>
<evidence type="ECO:0000255" key="1">
    <source>
        <dbReference type="HAMAP-Rule" id="MF_00068"/>
    </source>
</evidence>
<organism>
    <name type="scientific">Prochlorococcus marinus (strain MIT 9313)</name>
    <dbReference type="NCBI Taxonomy" id="74547"/>
    <lineage>
        <taxon>Bacteria</taxon>
        <taxon>Bacillati</taxon>
        <taxon>Cyanobacteriota</taxon>
        <taxon>Cyanophyceae</taxon>
        <taxon>Synechococcales</taxon>
        <taxon>Prochlorococcaceae</taxon>
        <taxon>Prochlorococcus</taxon>
    </lineage>
</organism>
<accession>Q7V7N4</accession>
<protein>
    <recommendedName>
        <fullName evidence="1">N-acetylmuramic acid 6-phosphate etherase</fullName>
        <shortName evidence="1">MurNAc-6-P etherase</shortName>
        <ecNumber evidence="1">4.2.1.126</ecNumber>
    </recommendedName>
    <alternativeName>
        <fullName evidence="1">N-acetylmuramic acid 6-phosphate hydrolase</fullName>
    </alternativeName>
    <alternativeName>
        <fullName evidence="1">N-acetylmuramic acid 6-phosphate lyase</fullName>
    </alternativeName>
</protein>
<proteinExistence type="inferred from homology"/>
<keyword id="KW-0119">Carbohydrate metabolism</keyword>
<keyword id="KW-0456">Lyase</keyword>
<keyword id="KW-1185">Reference proteome</keyword>
<sequence length="316" mass="33663">MTNVFADLNLHPSDNRGHLLTEKVNPKSECLDQLTTESLVTLFCEEDREPQRAVAAAIPELIQAVEAITDRLRSGGRLFYLGAGTSGRLGVLDAAECPPTFCSDPDLVQGVLAGGSAALLKSSEGLEDIEQLGKKDLEERDFSPADCLVGIAAGGTTPYVKGGLAYAKEINALAIAISCVPIEQAELPCSIDIRLLTGPELLTGSTRLKAGTATKMALNILSTCAMVRLGKVFGNRMVDVAATNIKLMDRALRILHDLADVDRVRGTELLQASDGSVKVALLMHTCGLDAETAQKLLIEHNNQLRTALARCKNCIA</sequence>
<dbReference type="EC" id="4.2.1.126" evidence="1"/>
<dbReference type="EMBL" id="BX548175">
    <property type="protein sequence ID" value="CAE20881.1"/>
    <property type="molecule type" value="Genomic_DNA"/>
</dbReference>
<dbReference type="RefSeq" id="WP_011130084.1">
    <property type="nucleotide sequence ID" value="NC_005071.1"/>
</dbReference>
<dbReference type="SMR" id="Q7V7N4"/>
<dbReference type="KEGG" id="pmt:PMT_0706"/>
<dbReference type="eggNOG" id="COG2103">
    <property type="taxonomic scope" value="Bacteria"/>
</dbReference>
<dbReference type="HOGENOM" id="CLU_049049_1_1_3"/>
<dbReference type="OrthoDB" id="9813395at2"/>
<dbReference type="UniPathway" id="UPA00342"/>
<dbReference type="Proteomes" id="UP000001423">
    <property type="component" value="Chromosome"/>
</dbReference>
<dbReference type="GO" id="GO:0097367">
    <property type="term" value="F:carbohydrate derivative binding"/>
    <property type="evidence" value="ECO:0007669"/>
    <property type="project" value="InterPro"/>
</dbReference>
<dbReference type="GO" id="GO:0016835">
    <property type="term" value="F:carbon-oxygen lyase activity"/>
    <property type="evidence" value="ECO:0007669"/>
    <property type="project" value="UniProtKB-UniRule"/>
</dbReference>
<dbReference type="GO" id="GO:0016803">
    <property type="term" value="F:ether hydrolase activity"/>
    <property type="evidence" value="ECO:0007669"/>
    <property type="project" value="TreeGrafter"/>
</dbReference>
<dbReference type="GO" id="GO:0046348">
    <property type="term" value="P:amino sugar catabolic process"/>
    <property type="evidence" value="ECO:0007669"/>
    <property type="project" value="InterPro"/>
</dbReference>
<dbReference type="GO" id="GO:0097173">
    <property type="term" value="P:N-acetylmuramic acid catabolic process"/>
    <property type="evidence" value="ECO:0007669"/>
    <property type="project" value="UniProtKB-UniPathway"/>
</dbReference>
<dbReference type="GO" id="GO:0009254">
    <property type="term" value="P:peptidoglycan turnover"/>
    <property type="evidence" value="ECO:0007669"/>
    <property type="project" value="TreeGrafter"/>
</dbReference>
<dbReference type="CDD" id="cd05007">
    <property type="entry name" value="SIS_Etherase"/>
    <property type="match status" value="1"/>
</dbReference>
<dbReference type="FunFam" id="3.40.50.10490:FF:000014">
    <property type="entry name" value="N-acetylmuramic acid 6-phosphate etherase"/>
    <property type="match status" value="1"/>
</dbReference>
<dbReference type="Gene3D" id="1.10.8.1080">
    <property type="match status" value="1"/>
</dbReference>
<dbReference type="Gene3D" id="3.40.50.10490">
    <property type="entry name" value="Glucose-6-phosphate isomerase like protein, domain 1"/>
    <property type="match status" value="1"/>
</dbReference>
<dbReference type="HAMAP" id="MF_00068">
    <property type="entry name" value="MurQ"/>
    <property type="match status" value="1"/>
</dbReference>
<dbReference type="InterPro" id="IPR005488">
    <property type="entry name" value="Etherase_MurQ"/>
</dbReference>
<dbReference type="InterPro" id="IPR005486">
    <property type="entry name" value="Glucokinase_regulatory_CS"/>
</dbReference>
<dbReference type="InterPro" id="IPR040190">
    <property type="entry name" value="MURQ/GCKR"/>
</dbReference>
<dbReference type="InterPro" id="IPR001347">
    <property type="entry name" value="SIS_dom"/>
</dbReference>
<dbReference type="InterPro" id="IPR046348">
    <property type="entry name" value="SIS_dom_sf"/>
</dbReference>
<dbReference type="NCBIfam" id="TIGR00274">
    <property type="entry name" value="N-acetylmuramic acid 6-phosphate etherase"/>
    <property type="match status" value="1"/>
</dbReference>
<dbReference type="NCBIfam" id="NF003915">
    <property type="entry name" value="PRK05441.1"/>
    <property type="match status" value="1"/>
</dbReference>
<dbReference type="NCBIfam" id="NF009222">
    <property type="entry name" value="PRK12570.1"/>
    <property type="match status" value="1"/>
</dbReference>
<dbReference type="PANTHER" id="PTHR10088">
    <property type="entry name" value="GLUCOKINASE REGULATORY PROTEIN"/>
    <property type="match status" value="1"/>
</dbReference>
<dbReference type="PANTHER" id="PTHR10088:SF4">
    <property type="entry name" value="GLUCOKINASE REGULATORY PROTEIN"/>
    <property type="match status" value="1"/>
</dbReference>
<dbReference type="Pfam" id="PF22645">
    <property type="entry name" value="GKRP_SIS_N"/>
    <property type="match status" value="1"/>
</dbReference>
<dbReference type="SUPFAM" id="SSF53697">
    <property type="entry name" value="SIS domain"/>
    <property type="match status" value="1"/>
</dbReference>
<dbReference type="PROSITE" id="PS01272">
    <property type="entry name" value="GCKR"/>
    <property type="match status" value="1"/>
</dbReference>
<dbReference type="PROSITE" id="PS51464">
    <property type="entry name" value="SIS"/>
    <property type="match status" value="1"/>
</dbReference>
<gene>
    <name evidence="1" type="primary">murQ</name>
    <name type="ordered locus">PMT_0706</name>
</gene>
<comment type="function">
    <text evidence="1">Specifically catalyzes the cleavage of the D-lactyl ether substituent of MurNAc 6-phosphate, producing GlcNAc 6-phosphate and D-lactate.</text>
</comment>
<comment type="catalytic activity">
    <reaction evidence="1">
        <text>N-acetyl-D-muramate 6-phosphate + H2O = N-acetyl-D-glucosamine 6-phosphate + (R)-lactate</text>
        <dbReference type="Rhea" id="RHEA:26410"/>
        <dbReference type="ChEBI" id="CHEBI:15377"/>
        <dbReference type="ChEBI" id="CHEBI:16004"/>
        <dbReference type="ChEBI" id="CHEBI:57513"/>
        <dbReference type="ChEBI" id="CHEBI:58722"/>
        <dbReference type="EC" id="4.2.1.126"/>
    </reaction>
</comment>
<comment type="pathway">
    <text evidence="1">Amino-sugar metabolism; N-acetylmuramate degradation.</text>
</comment>
<comment type="subunit">
    <text evidence="1">Homodimer.</text>
</comment>
<comment type="miscellaneous">
    <text evidence="1">A lyase-type mechanism (elimination/hydration) is suggested for the cleavage of the lactyl ether bond of MurNAc 6-phosphate, with the formation of an alpha,beta-unsaturated aldehyde intermediate with (E)-stereochemistry, followed by the syn addition of water to give product.</text>
</comment>
<comment type="similarity">
    <text evidence="1">Belongs to the GCKR-like family. MurNAc-6-P etherase subfamily.</text>
</comment>
<feature type="chain" id="PRO_0000249642" description="N-acetylmuramic acid 6-phosphate etherase">
    <location>
        <begin position="1"/>
        <end position="316"/>
    </location>
</feature>
<feature type="domain" description="SIS" evidence="1">
    <location>
        <begin position="68"/>
        <end position="231"/>
    </location>
</feature>
<feature type="active site" description="Proton donor" evidence="1">
    <location>
        <position position="96"/>
    </location>
</feature>
<feature type="active site" evidence="1">
    <location>
        <position position="127"/>
    </location>
</feature>
<name>MURQ_PROMM</name>